<organism>
    <name type="scientific">Rhizobium meliloti (strain 1021)</name>
    <name type="common">Ensifer meliloti</name>
    <name type="synonym">Sinorhizobium meliloti</name>
    <dbReference type="NCBI Taxonomy" id="266834"/>
    <lineage>
        <taxon>Bacteria</taxon>
        <taxon>Pseudomonadati</taxon>
        <taxon>Pseudomonadota</taxon>
        <taxon>Alphaproteobacteria</taxon>
        <taxon>Hyphomicrobiales</taxon>
        <taxon>Rhizobiaceae</taxon>
        <taxon>Sinorhizobium/Ensifer group</taxon>
        <taxon>Sinorhizobium</taxon>
    </lineage>
</organism>
<protein>
    <recommendedName>
        <fullName>Choline-sulfatase</fullName>
        <ecNumber>3.1.6.6</ecNumber>
    </recommendedName>
</protein>
<feature type="chain" id="PRO_0000192684" description="Choline-sulfatase">
    <location>
        <begin position="1"/>
        <end position="512"/>
    </location>
</feature>
<feature type="active site" description="Nucleophile" evidence="2">
    <location>
        <position position="54"/>
    </location>
</feature>
<feature type="active site" evidence="2">
    <location>
        <position position="104"/>
    </location>
</feature>
<feature type="binding site" evidence="1">
    <location>
        <position position="14"/>
    </location>
    <ligand>
        <name>Ca(2+)</name>
        <dbReference type="ChEBI" id="CHEBI:29108"/>
    </ligand>
</feature>
<feature type="binding site" evidence="1">
    <location>
        <position position="15"/>
    </location>
    <ligand>
        <name>Ca(2+)</name>
        <dbReference type="ChEBI" id="CHEBI:29108"/>
    </ligand>
</feature>
<feature type="binding site" description="via 3-oxoalanine" evidence="1">
    <location>
        <position position="54"/>
    </location>
    <ligand>
        <name>Ca(2+)</name>
        <dbReference type="ChEBI" id="CHEBI:29108"/>
    </ligand>
</feature>
<feature type="binding site" evidence="1">
    <location>
        <position position="296"/>
    </location>
    <ligand>
        <name>Ca(2+)</name>
        <dbReference type="ChEBI" id="CHEBI:29108"/>
    </ligand>
</feature>
<feature type="binding site" evidence="1">
    <location>
        <position position="297"/>
    </location>
    <ligand>
        <name>Ca(2+)</name>
        <dbReference type="ChEBI" id="CHEBI:29108"/>
    </ligand>
</feature>
<feature type="modified residue" description="3-oxoalanine (Cys)" evidence="2">
    <location>
        <position position="54"/>
    </location>
</feature>
<feature type="sequence conflict" description="In Ref. 1; AAC13371." evidence="3" ref="1">
    <original>R</original>
    <variation>S</variation>
    <location>
        <position position="430"/>
    </location>
</feature>
<feature type="strand" evidence="4">
    <location>
        <begin position="7"/>
        <end position="15"/>
    </location>
</feature>
<feature type="helix" evidence="4">
    <location>
        <begin position="18"/>
        <end position="20"/>
    </location>
</feature>
<feature type="strand" evidence="4">
    <location>
        <begin position="22"/>
        <end position="25"/>
    </location>
</feature>
<feature type="helix" evidence="4">
    <location>
        <begin position="32"/>
        <end position="39"/>
    </location>
</feature>
<feature type="strand" evidence="4">
    <location>
        <begin position="41"/>
        <end position="44"/>
    </location>
</feature>
<feature type="strand" evidence="4">
    <location>
        <begin position="50"/>
        <end position="53"/>
    </location>
</feature>
<feature type="helix" evidence="4">
    <location>
        <begin position="54"/>
        <end position="63"/>
    </location>
</feature>
<feature type="helix" evidence="4">
    <location>
        <begin position="67"/>
        <end position="70"/>
    </location>
</feature>
<feature type="helix" evidence="4">
    <location>
        <begin position="86"/>
        <end position="92"/>
    </location>
</feature>
<feature type="strand" evidence="4">
    <location>
        <begin position="96"/>
        <end position="101"/>
    </location>
</feature>
<feature type="strand" evidence="4">
    <location>
        <begin position="115"/>
        <end position="117"/>
    </location>
</feature>
<feature type="helix" evidence="5">
    <location>
        <begin position="127"/>
        <end position="129"/>
    </location>
</feature>
<feature type="turn" evidence="4">
    <location>
        <begin position="141"/>
        <end position="143"/>
    </location>
</feature>
<feature type="helix" evidence="4">
    <location>
        <begin position="148"/>
        <end position="151"/>
    </location>
</feature>
<feature type="helix" evidence="4">
    <location>
        <begin position="160"/>
        <end position="180"/>
    </location>
</feature>
<feature type="turn" evidence="4">
    <location>
        <begin position="181"/>
        <end position="184"/>
    </location>
</feature>
<feature type="strand" evidence="4">
    <location>
        <begin position="191"/>
        <end position="203"/>
    </location>
</feature>
<feature type="helix" evidence="4">
    <location>
        <begin position="208"/>
        <end position="211"/>
    </location>
</feature>
<feature type="helix" evidence="4">
    <location>
        <begin position="212"/>
        <end position="214"/>
    </location>
</feature>
<feature type="helix" evidence="4">
    <location>
        <begin position="229"/>
        <end position="231"/>
    </location>
</feature>
<feature type="helix" evidence="4">
    <location>
        <begin position="234"/>
        <end position="242"/>
    </location>
</feature>
<feature type="helix" evidence="4">
    <location>
        <begin position="245"/>
        <end position="247"/>
    </location>
</feature>
<feature type="helix" evidence="4">
    <location>
        <begin position="252"/>
        <end position="282"/>
    </location>
</feature>
<feature type="helix" evidence="4">
    <location>
        <begin position="286"/>
        <end position="288"/>
    </location>
</feature>
<feature type="strand" evidence="4">
    <location>
        <begin position="289"/>
        <end position="296"/>
    </location>
</feature>
<feature type="helix" evidence="4">
    <location>
        <begin position="303"/>
        <end position="305"/>
    </location>
</feature>
<feature type="helix" evidence="4">
    <location>
        <begin position="314"/>
        <end position="317"/>
    </location>
</feature>
<feature type="strand" evidence="4">
    <location>
        <begin position="321"/>
        <end position="325"/>
    </location>
</feature>
<feature type="strand" evidence="4">
    <location>
        <begin position="331"/>
        <end position="333"/>
    </location>
</feature>
<feature type="helix" evidence="4">
    <location>
        <begin position="339"/>
        <end position="341"/>
    </location>
</feature>
<feature type="helix" evidence="4">
    <location>
        <begin position="342"/>
        <end position="349"/>
    </location>
</feature>
<feature type="helix" evidence="4">
    <location>
        <begin position="354"/>
        <end position="357"/>
    </location>
</feature>
<feature type="helix" evidence="4">
    <location>
        <begin position="358"/>
        <end position="360"/>
    </location>
</feature>
<feature type="helix" evidence="4">
    <location>
        <begin position="367"/>
        <end position="370"/>
    </location>
</feature>
<feature type="strand" evidence="4">
    <location>
        <begin position="379"/>
        <end position="383"/>
    </location>
</feature>
<feature type="strand" evidence="4">
    <location>
        <begin position="392"/>
        <end position="397"/>
    </location>
</feature>
<feature type="strand" evidence="4">
    <location>
        <begin position="400"/>
        <end position="405"/>
    </location>
</feature>
<feature type="strand" evidence="4">
    <location>
        <begin position="411"/>
        <end position="414"/>
    </location>
</feature>
<feature type="turn" evidence="4">
    <location>
        <begin position="415"/>
        <end position="417"/>
    </location>
</feature>
<feature type="turn" evidence="4">
    <location>
        <begin position="425"/>
        <end position="427"/>
    </location>
</feature>
<feature type="helix" evidence="4">
    <location>
        <begin position="432"/>
        <end position="448"/>
    </location>
</feature>
<feature type="helix" evidence="4">
    <location>
        <begin position="451"/>
        <end position="472"/>
    </location>
</feature>
<feature type="strand" evidence="4">
    <location>
        <begin position="474"/>
        <end position="476"/>
    </location>
</feature>
<feature type="helix" evidence="4">
    <location>
        <begin position="488"/>
        <end position="490"/>
    </location>
</feature>
<feature type="helix" evidence="4">
    <location>
        <begin position="499"/>
        <end position="506"/>
    </location>
</feature>
<reference key="1">
    <citation type="journal article" date="1997" name="Microbiology">
        <title>Molecular characterization of the bet genes encoding glycine betaine synthesis in Sinorhizobium meliloti 102F34.</title>
        <authorList>
            <person name="Pocard J.A."/>
            <person name="Vincent N."/>
            <person name="Boncompagni E."/>
            <person name="Tombras Smith L."/>
            <person name="Poggi M.-C."/>
            <person name="Le Rudulier D."/>
        </authorList>
    </citation>
    <scope>NUCLEOTIDE SEQUENCE [GENOMIC DNA]</scope>
    <source>
        <strain>102F34</strain>
    </source>
</reference>
<reference key="2">
    <citation type="journal article" date="2001" name="Proc. Natl. Acad. Sci. U.S.A.">
        <title>Analysis of the chromosome sequence of the legume symbiont Sinorhizobium meliloti strain 1021.</title>
        <authorList>
            <person name="Capela D."/>
            <person name="Barloy-Hubler F."/>
            <person name="Gouzy J."/>
            <person name="Bothe G."/>
            <person name="Ampe F."/>
            <person name="Batut J."/>
            <person name="Boistard P."/>
            <person name="Becker A."/>
            <person name="Boutry M."/>
            <person name="Cadieu E."/>
            <person name="Dreano S."/>
            <person name="Gloux S."/>
            <person name="Godrie T."/>
            <person name="Goffeau A."/>
            <person name="Kahn D."/>
            <person name="Kiss E."/>
            <person name="Lelaure V."/>
            <person name="Masuy D."/>
            <person name="Pohl T."/>
            <person name="Portetelle D."/>
            <person name="Puehler A."/>
            <person name="Purnelle B."/>
            <person name="Ramsperger U."/>
            <person name="Renard C."/>
            <person name="Thebault P."/>
            <person name="Vandenbol M."/>
            <person name="Weidner S."/>
            <person name="Galibert F."/>
        </authorList>
    </citation>
    <scope>NUCLEOTIDE SEQUENCE [LARGE SCALE GENOMIC DNA]</scope>
    <source>
        <strain>1021</strain>
    </source>
</reference>
<reference key="3">
    <citation type="journal article" date="2001" name="Science">
        <title>The composite genome of the legume symbiont Sinorhizobium meliloti.</title>
        <authorList>
            <person name="Galibert F."/>
            <person name="Finan T.M."/>
            <person name="Long S.R."/>
            <person name="Puehler A."/>
            <person name="Abola P."/>
            <person name="Ampe F."/>
            <person name="Barloy-Hubler F."/>
            <person name="Barnett M.J."/>
            <person name="Becker A."/>
            <person name="Boistard P."/>
            <person name="Bothe G."/>
            <person name="Boutry M."/>
            <person name="Bowser L."/>
            <person name="Buhrmester J."/>
            <person name="Cadieu E."/>
            <person name="Capela D."/>
            <person name="Chain P."/>
            <person name="Cowie A."/>
            <person name="Davis R.W."/>
            <person name="Dreano S."/>
            <person name="Federspiel N.A."/>
            <person name="Fisher R.F."/>
            <person name="Gloux S."/>
            <person name="Godrie T."/>
            <person name="Goffeau A."/>
            <person name="Golding B."/>
            <person name="Gouzy J."/>
            <person name="Gurjal M."/>
            <person name="Hernandez-Lucas I."/>
            <person name="Hong A."/>
            <person name="Huizar L."/>
            <person name="Hyman R.W."/>
            <person name="Jones T."/>
            <person name="Kahn D."/>
            <person name="Kahn M.L."/>
            <person name="Kalman S."/>
            <person name="Keating D.H."/>
            <person name="Kiss E."/>
            <person name="Komp C."/>
            <person name="Lelaure V."/>
            <person name="Masuy D."/>
            <person name="Palm C."/>
            <person name="Peck M.C."/>
            <person name="Pohl T.M."/>
            <person name="Portetelle D."/>
            <person name="Purnelle B."/>
            <person name="Ramsperger U."/>
            <person name="Surzycki R."/>
            <person name="Thebault P."/>
            <person name="Vandenbol M."/>
            <person name="Vorhoelter F.J."/>
            <person name="Weidner S."/>
            <person name="Wells D.H."/>
            <person name="Wong K."/>
            <person name="Yeh K.-C."/>
            <person name="Batut J."/>
        </authorList>
    </citation>
    <scope>NUCLEOTIDE SEQUENCE [LARGE SCALE GENOMIC DNA]</scope>
    <source>
        <strain>1021</strain>
    </source>
</reference>
<reference key="4">
    <citation type="journal article" date="1998" name="Proc. Natl. Acad. Sci. U.S.A.">
        <title>Presence of a gene encoding choline sulfatase in Sinorhizobium meliloti bet operon: choline-O-sulfate is metabolized into glycine betaine.</title>
        <authorList>
            <person name="Oesteras M."/>
            <person name="Boncompagni E."/>
            <person name="Vincent N."/>
            <person name="Poggi M.-C."/>
            <person name="Le Rudulier D."/>
        </authorList>
    </citation>
    <scope>CHARACTERIZATION</scope>
    <source>
        <strain>102F34</strain>
    </source>
</reference>
<sequence length="512" mass="58505">MTTGKPNILIIMVDQLNGKLFPDGPADFLHAPNLKALAKRSARFHNNYTSSPLCAPARASFMAGQLPSRTRVYDNAAEYQSSIPTYAHHLRRAGYYTALSGKMHFVGPDQLHGFEERLTTDIYPADFGWTPDYRKPGERIDWWYHNLGSVTGAGVAEITNQMEYDDEVAFLANQKLYQLSRENDDESRRPWCLTVSFTHPHDPYVARRKFWDLYEDCEHLTPEVGAIPLDEQDPHSQRIMLSCDYQNFDVTEENVRRSRRAYFANISYLDEKVGELIDTLTRTRMLDDTLILFCSDHGDMLGERGLWFKMNFFEGSARVPLMIAGPGIAPGLHLTPTSNLDVTPTLADLAGISLEEVRPWTDGVSLVPMVNGVERTEPVLMEYAAEASYAPLVAIREGKWKYVYCALDPEQLFDLEADPLELTNLAENPRGPVDQATLTAFRDMRAAHWDMEAFDAAVRESQARRWVVYEALRNGAYYPWDHQPLQKASERYMRNHMNLDTLEESKRYPRGE</sequence>
<accession>O69787</accession>
<dbReference type="EC" id="3.1.6.6"/>
<dbReference type="EMBL" id="U39940">
    <property type="protein sequence ID" value="AAC13371.1"/>
    <property type="molecule type" value="Genomic_DNA"/>
</dbReference>
<dbReference type="EMBL" id="AL591688">
    <property type="protein sequence ID" value="CAC45521.1"/>
    <property type="molecule type" value="Genomic_DNA"/>
</dbReference>
<dbReference type="RefSeq" id="NP_385055.1">
    <property type="nucleotide sequence ID" value="NC_003047.1"/>
</dbReference>
<dbReference type="RefSeq" id="WP_010968942.1">
    <property type="nucleotide sequence ID" value="NC_003047.1"/>
</dbReference>
<dbReference type="PDB" id="6FNY">
    <property type="method" value="X-ray"/>
    <property type="resolution" value="2.79 A"/>
    <property type="chains" value="A/B/C/D/E/F/G/H=2-512"/>
</dbReference>
<dbReference type="PDB" id="6G5Z">
    <property type="method" value="X-ray"/>
    <property type="resolution" value="1.98 A"/>
    <property type="chains" value="A/B/C/D=5-512"/>
</dbReference>
<dbReference type="PDB" id="6G60">
    <property type="method" value="X-ray"/>
    <property type="resolution" value="1.84 A"/>
    <property type="chains" value="A/B/C/D=5-512"/>
</dbReference>
<dbReference type="PDB" id="7PTH">
    <property type="method" value="X-ray"/>
    <property type="resolution" value="1.85 A"/>
    <property type="chains" value="A/B/C/D=1-512"/>
</dbReference>
<dbReference type="PDB" id="7PTJ">
    <property type="method" value="X-ray"/>
    <property type="resolution" value="2.10 A"/>
    <property type="chains" value="A/B/C/D=1-512"/>
</dbReference>
<dbReference type="PDBsum" id="6FNY"/>
<dbReference type="PDBsum" id="6G5Z"/>
<dbReference type="PDBsum" id="6G60"/>
<dbReference type="PDBsum" id="7PTH"/>
<dbReference type="PDBsum" id="7PTJ"/>
<dbReference type="SMR" id="O69787"/>
<dbReference type="EnsemblBacteria" id="CAC45521">
    <property type="protein sequence ID" value="CAC45521"/>
    <property type="gene ID" value="SMc00127"/>
</dbReference>
<dbReference type="KEGG" id="sme:SMc00127"/>
<dbReference type="PATRIC" id="fig|266834.11.peg.2348"/>
<dbReference type="eggNOG" id="COG3119">
    <property type="taxonomic scope" value="Bacteria"/>
</dbReference>
<dbReference type="HOGENOM" id="CLU_006332_9_1_5"/>
<dbReference type="OrthoDB" id="9795675at2"/>
<dbReference type="BioCyc" id="MetaCyc:MONOMER-223"/>
<dbReference type="BRENDA" id="3.1.6.6">
    <property type="organism ID" value="5347"/>
</dbReference>
<dbReference type="UniPathway" id="UPA00290">
    <property type="reaction ID" value="UER00431"/>
</dbReference>
<dbReference type="Proteomes" id="UP000001976">
    <property type="component" value="Chromosome"/>
</dbReference>
<dbReference type="GO" id="GO:0005737">
    <property type="term" value="C:cytoplasm"/>
    <property type="evidence" value="ECO:0007669"/>
    <property type="project" value="TreeGrafter"/>
</dbReference>
<dbReference type="GO" id="GO:0047753">
    <property type="term" value="F:choline-sulfatase activity"/>
    <property type="evidence" value="ECO:0007669"/>
    <property type="project" value="UniProtKB-EC"/>
</dbReference>
<dbReference type="GO" id="GO:0046872">
    <property type="term" value="F:metal ion binding"/>
    <property type="evidence" value="ECO:0007669"/>
    <property type="project" value="UniProtKB-KW"/>
</dbReference>
<dbReference type="GO" id="GO:0042425">
    <property type="term" value="P:choline biosynthetic process"/>
    <property type="evidence" value="ECO:0007669"/>
    <property type="project" value="UniProtKB-UniPathway"/>
</dbReference>
<dbReference type="CDD" id="cd16032">
    <property type="entry name" value="choline-sulfatase"/>
    <property type="match status" value="1"/>
</dbReference>
<dbReference type="FunFam" id="3.40.720.10:FF:000032">
    <property type="entry name" value="Choline sulfatase"/>
    <property type="match status" value="1"/>
</dbReference>
<dbReference type="Gene3D" id="3.40.720.10">
    <property type="entry name" value="Alkaline Phosphatase, subunit A"/>
    <property type="match status" value="1"/>
</dbReference>
<dbReference type="InterPro" id="IPR017850">
    <property type="entry name" value="Alkaline_phosphatase_core_sf"/>
</dbReference>
<dbReference type="InterPro" id="IPR017785">
    <property type="entry name" value="Choline-sulfatase"/>
</dbReference>
<dbReference type="InterPro" id="IPR025863">
    <property type="entry name" value="Choline_sulf_C_dom"/>
</dbReference>
<dbReference type="InterPro" id="IPR024607">
    <property type="entry name" value="Sulfatase_CS"/>
</dbReference>
<dbReference type="InterPro" id="IPR000917">
    <property type="entry name" value="Sulfatase_N"/>
</dbReference>
<dbReference type="NCBIfam" id="TIGR03417">
    <property type="entry name" value="chol_sulfatase"/>
    <property type="match status" value="1"/>
</dbReference>
<dbReference type="PANTHER" id="PTHR45953">
    <property type="entry name" value="IDURONATE 2-SULFATASE"/>
    <property type="match status" value="1"/>
</dbReference>
<dbReference type="PANTHER" id="PTHR45953:SF1">
    <property type="entry name" value="IDURONATE 2-SULFATASE"/>
    <property type="match status" value="1"/>
</dbReference>
<dbReference type="Pfam" id="PF12411">
    <property type="entry name" value="Choline_sulf_C"/>
    <property type="match status" value="1"/>
</dbReference>
<dbReference type="Pfam" id="PF00884">
    <property type="entry name" value="Sulfatase"/>
    <property type="match status" value="1"/>
</dbReference>
<dbReference type="SUPFAM" id="SSF53649">
    <property type="entry name" value="Alkaline phosphatase-like"/>
    <property type="match status" value="1"/>
</dbReference>
<dbReference type="PROSITE" id="PS00523">
    <property type="entry name" value="SULFATASE_1"/>
    <property type="match status" value="1"/>
</dbReference>
<dbReference type="PROSITE" id="PS00149">
    <property type="entry name" value="SULFATASE_2"/>
    <property type="match status" value="1"/>
</dbReference>
<gene>
    <name type="primary">betC</name>
    <name type="ordered locus">R00949</name>
    <name type="ORF">SMc00127</name>
</gene>
<proteinExistence type="evidence at protein level"/>
<keyword id="KW-0002">3D-structure</keyword>
<keyword id="KW-0106">Calcium</keyword>
<keyword id="KW-0378">Hydrolase</keyword>
<keyword id="KW-0479">Metal-binding</keyword>
<keyword id="KW-1185">Reference proteome</keyword>
<evidence type="ECO:0000250" key="1"/>
<evidence type="ECO:0000250" key="2">
    <source>
        <dbReference type="UniProtKB" id="P15289"/>
    </source>
</evidence>
<evidence type="ECO:0000305" key="3"/>
<evidence type="ECO:0007829" key="4">
    <source>
        <dbReference type="PDB" id="6G60"/>
    </source>
</evidence>
<evidence type="ECO:0007829" key="5">
    <source>
        <dbReference type="PDB" id="7PTH"/>
    </source>
</evidence>
<name>BETC_RHIME</name>
<comment type="function">
    <text>Converts choline-O-sulfate into choline.</text>
</comment>
<comment type="catalytic activity">
    <reaction>
        <text>choline sulfate + H2O = choline + sulfate + H(+)</text>
        <dbReference type="Rhea" id="RHEA:20820"/>
        <dbReference type="ChEBI" id="CHEBI:15354"/>
        <dbReference type="ChEBI" id="CHEBI:15377"/>
        <dbReference type="ChEBI" id="CHEBI:15378"/>
        <dbReference type="ChEBI" id="CHEBI:16189"/>
        <dbReference type="ChEBI" id="CHEBI:16822"/>
        <dbReference type="EC" id="3.1.6.6"/>
    </reaction>
</comment>
<comment type="cofactor">
    <cofactor evidence="1">
        <name>Ca(2+)</name>
        <dbReference type="ChEBI" id="CHEBI:29108"/>
    </cofactor>
    <text evidence="1">Binds 1 Ca(2+) ion per subunit.</text>
</comment>
<comment type="pathway">
    <text>Amine and polyamine biosynthesis; choline biosynthesis; choline from choline sulfate: step 1/1.</text>
</comment>
<comment type="PTM">
    <text evidence="1">The conversion to 3-oxoalanine (also known as C-formylglycine, FGly), of a serine or cysteine residue in prokaryotes and of a cysteine residue in eukaryotes, is critical for catalytic activity.</text>
</comment>
<comment type="similarity">
    <text evidence="3">Belongs to the sulfatase family.</text>
</comment>